<gene>
    <name evidence="1" type="primary">clpX</name>
    <name type="ordered locus">Csal_2045</name>
</gene>
<proteinExistence type="inferred from homology"/>
<comment type="function">
    <text evidence="1">ATP-dependent specificity component of the Clp protease. It directs the protease to specific substrates. Can perform chaperone functions in the absence of ClpP.</text>
</comment>
<comment type="subunit">
    <text evidence="1">Component of the ClpX-ClpP complex. Forms a hexameric ring that, in the presence of ATP, binds to fourteen ClpP subunits assembled into a disk-like structure with a central cavity, resembling the structure of eukaryotic proteasomes.</text>
</comment>
<comment type="similarity">
    <text evidence="1">Belongs to the ClpX chaperone family.</text>
</comment>
<accession>Q1QVW2</accession>
<sequence>MADGKGKDESGKLLYCSFCGKNQNEVRKLIAGPSVYICDECVDLCNDIIREEVLEADAEGDEERLPAPREIRNTLDDYVIGQDRAKRVLSVAVYNHYKRLRADVKSEDVELGKSNILLIGPTGSGKTLLAETMARLLNVPFTIADATTLTEAGYVGEDVENIIQKLLQKCDYDVDKAQRGIVYIDEIDKISRKSDNPSITRDVSGEGVQQALLKLIEGTTASIPPQGGRKHPQQEFLQVDTSNMLFIVGGAFAGLEKVIRDRVEKGGIGFNAEVKSKDSEKAMGDILAGVEPEDLVKFGLIPEFVGRVPVIATLTELSEEALIQILTEPKNSLIKQYVHLFAMEGVELEFREDALRAVAHKAMARNTGARGLRSILESVLLDTMYEVPSLEDVTKVVIDASVITGDSEPLLIYSQQEESKVAGKDG</sequence>
<reference key="1">
    <citation type="journal article" date="2011" name="Stand. Genomic Sci.">
        <title>Complete genome sequence of the halophilic and highly halotolerant Chromohalobacter salexigens type strain (1H11(T)).</title>
        <authorList>
            <person name="Copeland A."/>
            <person name="O'Connor K."/>
            <person name="Lucas S."/>
            <person name="Lapidus A."/>
            <person name="Berry K.W."/>
            <person name="Detter J.C."/>
            <person name="Del Rio T.G."/>
            <person name="Hammon N."/>
            <person name="Dalin E."/>
            <person name="Tice H."/>
            <person name="Pitluck S."/>
            <person name="Bruce D."/>
            <person name="Goodwin L."/>
            <person name="Han C."/>
            <person name="Tapia R."/>
            <person name="Saunders E."/>
            <person name="Schmutz J."/>
            <person name="Brettin T."/>
            <person name="Larimer F."/>
            <person name="Land M."/>
            <person name="Hauser L."/>
            <person name="Vargas C."/>
            <person name="Nieto J.J."/>
            <person name="Kyrpides N.C."/>
            <person name="Ivanova N."/>
            <person name="Goker M."/>
            <person name="Klenk H.P."/>
            <person name="Csonka L.N."/>
            <person name="Woyke T."/>
        </authorList>
    </citation>
    <scope>NUCLEOTIDE SEQUENCE [LARGE SCALE GENOMIC DNA]</scope>
    <source>
        <strain>ATCC BAA-138 / DSM 3043 / CIP 106854 / NCIMB 13768 / 1H11</strain>
    </source>
</reference>
<dbReference type="EMBL" id="CP000285">
    <property type="protein sequence ID" value="ABE59396.1"/>
    <property type="molecule type" value="Genomic_DNA"/>
</dbReference>
<dbReference type="RefSeq" id="WP_011507342.1">
    <property type="nucleotide sequence ID" value="NC_007963.1"/>
</dbReference>
<dbReference type="SMR" id="Q1QVW2"/>
<dbReference type="STRING" id="290398.Csal_2045"/>
<dbReference type="GeneID" id="95334756"/>
<dbReference type="KEGG" id="csa:Csal_2045"/>
<dbReference type="eggNOG" id="COG1219">
    <property type="taxonomic scope" value="Bacteria"/>
</dbReference>
<dbReference type="HOGENOM" id="CLU_014218_8_2_6"/>
<dbReference type="OrthoDB" id="9804062at2"/>
<dbReference type="Proteomes" id="UP000000239">
    <property type="component" value="Chromosome"/>
</dbReference>
<dbReference type="GO" id="GO:0009376">
    <property type="term" value="C:HslUV protease complex"/>
    <property type="evidence" value="ECO:0007669"/>
    <property type="project" value="TreeGrafter"/>
</dbReference>
<dbReference type="GO" id="GO:0005524">
    <property type="term" value="F:ATP binding"/>
    <property type="evidence" value="ECO:0007669"/>
    <property type="project" value="UniProtKB-UniRule"/>
</dbReference>
<dbReference type="GO" id="GO:0016887">
    <property type="term" value="F:ATP hydrolysis activity"/>
    <property type="evidence" value="ECO:0007669"/>
    <property type="project" value="InterPro"/>
</dbReference>
<dbReference type="GO" id="GO:0140662">
    <property type="term" value="F:ATP-dependent protein folding chaperone"/>
    <property type="evidence" value="ECO:0007669"/>
    <property type="project" value="InterPro"/>
</dbReference>
<dbReference type="GO" id="GO:0046983">
    <property type="term" value="F:protein dimerization activity"/>
    <property type="evidence" value="ECO:0007669"/>
    <property type="project" value="InterPro"/>
</dbReference>
<dbReference type="GO" id="GO:0051082">
    <property type="term" value="F:unfolded protein binding"/>
    <property type="evidence" value="ECO:0007669"/>
    <property type="project" value="UniProtKB-UniRule"/>
</dbReference>
<dbReference type="GO" id="GO:0008270">
    <property type="term" value="F:zinc ion binding"/>
    <property type="evidence" value="ECO:0007669"/>
    <property type="project" value="InterPro"/>
</dbReference>
<dbReference type="GO" id="GO:0051301">
    <property type="term" value="P:cell division"/>
    <property type="evidence" value="ECO:0007669"/>
    <property type="project" value="TreeGrafter"/>
</dbReference>
<dbReference type="GO" id="GO:0051603">
    <property type="term" value="P:proteolysis involved in protein catabolic process"/>
    <property type="evidence" value="ECO:0007669"/>
    <property type="project" value="TreeGrafter"/>
</dbReference>
<dbReference type="CDD" id="cd19497">
    <property type="entry name" value="RecA-like_ClpX"/>
    <property type="match status" value="1"/>
</dbReference>
<dbReference type="FunFam" id="1.10.8.60:FF:000002">
    <property type="entry name" value="ATP-dependent Clp protease ATP-binding subunit ClpX"/>
    <property type="match status" value="1"/>
</dbReference>
<dbReference type="FunFam" id="3.40.50.300:FF:000005">
    <property type="entry name" value="ATP-dependent Clp protease ATP-binding subunit ClpX"/>
    <property type="match status" value="1"/>
</dbReference>
<dbReference type="Gene3D" id="1.10.8.60">
    <property type="match status" value="1"/>
</dbReference>
<dbReference type="Gene3D" id="6.20.220.10">
    <property type="entry name" value="ClpX chaperone, C4-type zinc finger domain"/>
    <property type="match status" value="1"/>
</dbReference>
<dbReference type="Gene3D" id="3.40.50.300">
    <property type="entry name" value="P-loop containing nucleotide triphosphate hydrolases"/>
    <property type="match status" value="1"/>
</dbReference>
<dbReference type="HAMAP" id="MF_00175">
    <property type="entry name" value="ClpX"/>
    <property type="match status" value="1"/>
</dbReference>
<dbReference type="InterPro" id="IPR003593">
    <property type="entry name" value="AAA+_ATPase"/>
</dbReference>
<dbReference type="InterPro" id="IPR050052">
    <property type="entry name" value="ATP-dep_Clp_protease_ClpX"/>
</dbReference>
<dbReference type="InterPro" id="IPR003959">
    <property type="entry name" value="ATPase_AAA_core"/>
</dbReference>
<dbReference type="InterPro" id="IPR019489">
    <property type="entry name" value="Clp_ATPase_C"/>
</dbReference>
<dbReference type="InterPro" id="IPR004487">
    <property type="entry name" value="Clp_protease_ATP-bd_su_ClpX"/>
</dbReference>
<dbReference type="InterPro" id="IPR046425">
    <property type="entry name" value="ClpX_bact"/>
</dbReference>
<dbReference type="InterPro" id="IPR027417">
    <property type="entry name" value="P-loop_NTPase"/>
</dbReference>
<dbReference type="InterPro" id="IPR010603">
    <property type="entry name" value="Znf_CppX_C4"/>
</dbReference>
<dbReference type="InterPro" id="IPR038366">
    <property type="entry name" value="Znf_CppX_C4_sf"/>
</dbReference>
<dbReference type="NCBIfam" id="TIGR00382">
    <property type="entry name" value="clpX"/>
    <property type="match status" value="1"/>
</dbReference>
<dbReference type="NCBIfam" id="NF003745">
    <property type="entry name" value="PRK05342.1"/>
    <property type="match status" value="1"/>
</dbReference>
<dbReference type="PANTHER" id="PTHR48102:SF7">
    <property type="entry name" value="ATP-DEPENDENT CLP PROTEASE ATP-BINDING SUBUNIT CLPX-LIKE, MITOCHONDRIAL"/>
    <property type="match status" value="1"/>
</dbReference>
<dbReference type="PANTHER" id="PTHR48102">
    <property type="entry name" value="ATP-DEPENDENT CLP PROTEASE ATP-BINDING SUBUNIT CLPX-LIKE, MITOCHONDRIAL-RELATED"/>
    <property type="match status" value="1"/>
</dbReference>
<dbReference type="Pfam" id="PF07724">
    <property type="entry name" value="AAA_2"/>
    <property type="match status" value="1"/>
</dbReference>
<dbReference type="Pfam" id="PF10431">
    <property type="entry name" value="ClpB_D2-small"/>
    <property type="match status" value="1"/>
</dbReference>
<dbReference type="Pfam" id="PF06689">
    <property type="entry name" value="zf-C4_ClpX"/>
    <property type="match status" value="1"/>
</dbReference>
<dbReference type="SMART" id="SM00382">
    <property type="entry name" value="AAA"/>
    <property type="match status" value="1"/>
</dbReference>
<dbReference type="SMART" id="SM01086">
    <property type="entry name" value="ClpB_D2-small"/>
    <property type="match status" value="1"/>
</dbReference>
<dbReference type="SMART" id="SM00994">
    <property type="entry name" value="zf-C4_ClpX"/>
    <property type="match status" value="1"/>
</dbReference>
<dbReference type="SUPFAM" id="SSF57716">
    <property type="entry name" value="Glucocorticoid receptor-like (DNA-binding domain)"/>
    <property type="match status" value="1"/>
</dbReference>
<dbReference type="SUPFAM" id="SSF52540">
    <property type="entry name" value="P-loop containing nucleoside triphosphate hydrolases"/>
    <property type="match status" value="1"/>
</dbReference>
<dbReference type="PROSITE" id="PS51902">
    <property type="entry name" value="CLPX_ZB"/>
    <property type="match status" value="1"/>
</dbReference>
<keyword id="KW-0067">ATP-binding</keyword>
<keyword id="KW-0143">Chaperone</keyword>
<keyword id="KW-0479">Metal-binding</keyword>
<keyword id="KW-0547">Nucleotide-binding</keyword>
<keyword id="KW-1185">Reference proteome</keyword>
<keyword id="KW-0862">Zinc</keyword>
<protein>
    <recommendedName>
        <fullName evidence="1">ATP-dependent Clp protease ATP-binding subunit ClpX</fullName>
    </recommendedName>
</protein>
<name>CLPX_CHRSD</name>
<evidence type="ECO:0000255" key="1">
    <source>
        <dbReference type="HAMAP-Rule" id="MF_00175"/>
    </source>
</evidence>
<evidence type="ECO:0000255" key="2">
    <source>
        <dbReference type="PROSITE-ProRule" id="PRU01250"/>
    </source>
</evidence>
<feature type="chain" id="PRO_1000024542" description="ATP-dependent Clp protease ATP-binding subunit ClpX">
    <location>
        <begin position="1"/>
        <end position="426"/>
    </location>
</feature>
<feature type="domain" description="ClpX-type ZB" evidence="2">
    <location>
        <begin position="4"/>
        <end position="57"/>
    </location>
</feature>
<feature type="binding site" evidence="2">
    <location>
        <position position="16"/>
    </location>
    <ligand>
        <name>Zn(2+)</name>
        <dbReference type="ChEBI" id="CHEBI:29105"/>
    </ligand>
</feature>
<feature type="binding site" evidence="2">
    <location>
        <position position="19"/>
    </location>
    <ligand>
        <name>Zn(2+)</name>
        <dbReference type="ChEBI" id="CHEBI:29105"/>
    </ligand>
</feature>
<feature type="binding site" evidence="2">
    <location>
        <position position="38"/>
    </location>
    <ligand>
        <name>Zn(2+)</name>
        <dbReference type="ChEBI" id="CHEBI:29105"/>
    </ligand>
</feature>
<feature type="binding site" evidence="2">
    <location>
        <position position="41"/>
    </location>
    <ligand>
        <name>Zn(2+)</name>
        <dbReference type="ChEBI" id="CHEBI:29105"/>
    </ligand>
</feature>
<feature type="binding site" evidence="1">
    <location>
        <begin position="121"/>
        <end position="128"/>
    </location>
    <ligand>
        <name>ATP</name>
        <dbReference type="ChEBI" id="CHEBI:30616"/>
    </ligand>
</feature>
<organism>
    <name type="scientific">Chromohalobacter salexigens (strain ATCC BAA-138 / DSM 3043 / CIP 106854 / NCIMB 13768 / 1H11)</name>
    <dbReference type="NCBI Taxonomy" id="290398"/>
    <lineage>
        <taxon>Bacteria</taxon>
        <taxon>Pseudomonadati</taxon>
        <taxon>Pseudomonadota</taxon>
        <taxon>Gammaproteobacteria</taxon>
        <taxon>Oceanospirillales</taxon>
        <taxon>Halomonadaceae</taxon>
        <taxon>Chromohalobacter</taxon>
    </lineage>
</organism>